<feature type="chain" id="PRO_1000067621" description="Large ribosomal subunit protein uL5">
    <location>
        <begin position="1"/>
        <end position="180"/>
    </location>
</feature>
<proteinExistence type="inferred from homology"/>
<organism>
    <name type="scientific">Limosilactobacillus reuteri (strain DSM 20016)</name>
    <name type="common">Lactobacillus reuteri</name>
    <dbReference type="NCBI Taxonomy" id="557436"/>
    <lineage>
        <taxon>Bacteria</taxon>
        <taxon>Bacillati</taxon>
        <taxon>Bacillota</taxon>
        <taxon>Bacilli</taxon>
        <taxon>Lactobacillales</taxon>
        <taxon>Lactobacillaceae</taxon>
        <taxon>Limosilactobacillus</taxon>
    </lineage>
</organism>
<dbReference type="EMBL" id="CP000705">
    <property type="protein sequence ID" value="ABQ83717.1"/>
    <property type="molecule type" value="Genomic_DNA"/>
</dbReference>
<dbReference type="RefSeq" id="WP_003668784.1">
    <property type="nucleotide sequence ID" value="NZ_AZDD01000010.1"/>
</dbReference>
<dbReference type="SMR" id="A5VLJ3"/>
<dbReference type="STRING" id="557436.Lreu_1471"/>
<dbReference type="GeneID" id="77191467"/>
<dbReference type="KEGG" id="lre:Lreu_1471"/>
<dbReference type="PATRIC" id="fig|557436.17.peg.152"/>
<dbReference type="eggNOG" id="COG0094">
    <property type="taxonomic scope" value="Bacteria"/>
</dbReference>
<dbReference type="HOGENOM" id="CLU_061015_2_1_9"/>
<dbReference type="Proteomes" id="UP000001991">
    <property type="component" value="Chromosome"/>
</dbReference>
<dbReference type="GO" id="GO:1990904">
    <property type="term" value="C:ribonucleoprotein complex"/>
    <property type="evidence" value="ECO:0007669"/>
    <property type="project" value="UniProtKB-KW"/>
</dbReference>
<dbReference type="GO" id="GO:0005840">
    <property type="term" value="C:ribosome"/>
    <property type="evidence" value="ECO:0007669"/>
    <property type="project" value="UniProtKB-KW"/>
</dbReference>
<dbReference type="GO" id="GO:0019843">
    <property type="term" value="F:rRNA binding"/>
    <property type="evidence" value="ECO:0007669"/>
    <property type="project" value="UniProtKB-UniRule"/>
</dbReference>
<dbReference type="GO" id="GO:0003735">
    <property type="term" value="F:structural constituent of ribosome"/>
    <property type="evidence" value="ECO:0007669"/>
    <property type="project" value="InterPro"/>
</dbReference>
<dbReference type="GO" id="GO:0000049">
    <property type="term" value="F:tRNA binding"/>
    <property type="evidence" value="ECO:0007669"/>
    <property type="project" value="UniProtKB-UniRule"/>
</dbReference>
<dbReference type="GO" id="GO:0006412">
    <property type="term" value="P:translation"/>
    <property type="evidence" value="ECO:0007669"/>
    <property type="project" value="UniProtKB-UniRule"/>
</dbReference>
<dbReference type="FunFam" id="3.30.1440.10:FF:000001">
    <property type="entry name" value="50S ribosomal protein L5"/>
    <property type="match status" value="1"/>
</dbReference>
<dbReference type="Gene3D" id="3.30.1440.10">
    <property type="match status" value="1"/>
</dbReference>
<dbReference type="HAMAP" id="MF_01333_B">
    <property type="entry name" value="Ribosomal_uL5_B"/>
    <property type="match status" value="1"/>
</dbReference>
<dbReference type="InterPro" id="IPR002132">
    <property type="entry name" value="Ribosomal_uL5"/>
</dbReference>
<dbReference type="InterPro" id="IPR020930">
    <property type="entry name" value="Ribosomal_uL5_bac-type"/>
</dbReference>
<dbReference type="InterPro" id="IPR031309">
    <property type="entry name" value="Ribosomal_uL5_C"/>
</dbReference>
<dbReference type="InterPro" id="IPR020929">
    <property type="entry name" value="Ribosomal_uL5_CS"/>
</dbReference>
<dbReference type="InterPro" id="IPR022803">
    <property type="entry name" value="Ribosomal_uL5_dom_sf"/>
</dbReference>
<dbReference type="InterPro" id="IPR031310">
    <property type="entry name" value="Ribosomal_uL5_N"/>
</dbReference>
<dbReference type="NCBIfam" id="NF000585">
    <property type="entry name" value="PRK00010.1"/>
    <property type="match status" value="1"/>
</dbReference>
<dbReference type="PANTHER" id="PTHR11994">
    <property type="entry name" value="60S RIBOSOMAL PROTEIN L11-RELATED"/>
    <property type="match status" value="1"/>
</dbReference>
<dbReference type="Pfam" id="PF00281">
    <property type="entry name" value="Ribosomal_L5"/>
    <property type="match status" value="1"/>
</dbReference>
<dbReference type="Pfam" id="PF00673">
    <property type="entry name" value="Ribosomal_L5_C"/>
    <property type="match status" value="1"/>
</dbReference>
<dbReference type="PIRSF" id="PIRSF002161">
    <property type="entry name" value="Ribosomal_L5"/>
    <property type="match status" value="1"/>
</dbReference>
<dbReference type="SUPFAM" id="SSF55282">
    <property type="entry name" value="RL5-like"/>
    <property type="match status" value="1"/>
</dbReference>
<dbReference type="PROSITE" id="PS00358">
    <property type="entry name" value="RIBOSOMAL_L5"/>
    <property type="match status" value="1"/>
</dbReference>
<accession>A5VLJ3</accession>
<comment type="function">
    <text evidence="1">This is one of the proteins that bind and probably mediate the attachment of the 5S RNA into the large ribosomal subunit, where it forms part of the central protuberance. In the 70S ribosome it contacts protein S13 of the 30S subunit (bridge B1b), connecting the 2 subunits; this bridge is implicated in subunit movement. Contacts the P site tRNA; the 5S rRNA and some of its associated proteins might help stabilize positioning of ribosome-bound tRNAs.</text>
</comment>
<comment type="subunit">
    <text evidence="1">Part of the 50S ribosomal subunit; part of the 5S rRNA/L5/L18/L25 subcomplex. Contacts the 5S rRNA and the P site tRNA. Forms a bridge to the 30S subunit in the 70S ribosome.</text>
</comment>
<comment type="similarity">
    <text evidence="1">Belongs to the universal ribosomal protein uL5 family.</text>
</comment>
<evidence type="ECO:0000255" key="1">
    <source>
        <dbReference type="HAMAP-Rule" id="MF_01333"/>
    </source>
</evidence>
<evidence type="ECO:0000305" key="2"/>
<reference key="1">
    <citation type="journal article" date="2011" name="PLoS Genet.">
        <title>The evolution of host specialization in the vertebrate gut symbiont Lactobacillus reuteri.</title>
        <authorList>
            <person name="Frese S.A."/>
            <person name="Benson A.K."/>
            <person name="Tannock G.W."/>
            <person name="Loach D.M."/>
            <person name="Kim J."/>
            <person name="Zhang M."/>
            <person name="Oh P.L."/>
            <person name="Heng N.C."/>
            <person name="Patil P.B."/>
            <person name="Juge N."/>
            <person name="Mackenzie D.A."/>
            <person name="Pearson B.M."/>
            <person name="Lapidus A."/>
            <person name="Dalin E."/>
            <person name="Tice H."/>
            <person name="Goltsman E."/>
            <person name="Land M."/>
            <person name="Hauser L."/>
            <person name="Ivanova N."/>
            <person name="Kyrpides N.C."/>
            <person name="Walter J."/>
        </authorList>
    </citation>
    <scope>NUCLEOTIDE SEQUENCE [LARGE SCALE GENOMIC DNA]</scope>
    <source>
        <strain>DSM 20016</strain>
    </source>
</reference>
<sequence length="180" mass="20171">MENRLKAKYENEIRPALIEKFNYSSVMQAPKIDKIVLNMGVGDATTNSKNLDEAVEELGLISGQKPLITKAKKSIAGFRLREGMSIGAKVTLRGERMYDFLDKLVNVALPRVRDFHGVSNKAFDGRGNYTLGIHEQLIFPEIDYDKVNRVRGLDVVIVTTAQTDEESRELLAQLGMPFAK</sequence>
<gene>
    <name evidence="1" type="primary">rplE</name>
    <name type="ordered locus">Lreu_1471</name>
</gene>
<name>RL5_LIMRD</name>
<keyword id="KW-1185">Reference proteome</keyword>
<keyword id="KW-0687">Ribonucleoprotein</keyword>
<keyword id="KW-0689">Ribosomal protein</keyword>
<keyword id="KW-0694">RNA-binding</keyword>
<keyword id="KW-0699">rRNA-binding</keyword>
<keyword id="KW-0820">tRNA-binding</keyword>
<protein>
    <recommendedName>
        <fullName evidence="1">Large ribosomal subunit protein uL5</fullName>
    </recommendedName>
    <alternativeName>
        <fullName evidence="2">50S ribosomal protein L5</fullName>
    </alternativeName>
</protein>